<sequence length="429" mass="46561">MANVVVVGSQWGDEGKGKIVDWLSERADVIVRYQGGHNAGHTLVIDGVSYKLSLLPSGLVRGKLSVIGNGVVVDPHHFVAEVEKLRGQGIDVTPDVLRVAENAPLILSIHRELDAMREGSNSGLKIGTTKRGIGPAYEDKVGRRAIRVIDLTEPETLRPKVERLLAHHNSLRRGMGLEEIAVETILTELTSVADQILPYIDQVWRVLDERRKAGARILFEGAQGALLDNDHGTYPFVTSSNTVAGQAAAGSGLGPTAIGYVLGITKAYTTRVGEGPFPTELNDEIGEFLGTKGHEFGVVTGRKRRCGWFDAVIVRQTVRTSGINGIALTKLDVLDGLEEIKICVAYELDGKRIDYLPSSMGAQARVKPIYETLPGWSETTAGARSWNDLPAQAVKYVRHIEELIGAPVAMLSTSPEREDTILVTDPFHD</sequence>
<gene>
    <name evidence="1" type="primary">purA</name>
    <name type="ordered locus">BAB1_1695</name>
</gene>
<name>PURA_BRUA2</name>
<organism>
    <name type="scientific">Brucella abortus (strain 2308)</name>
    <dbReference type="NCBI Taxonomy" id="359391"/>
    <lineage>
        <taxon>Bacteria</taxon>
        <taxon>Pseudomonadati</taxon>
        <taxon>Pseudomonadota</taxon>
        <taxon>Alphaproteobacteria</taxon>
        <taxon>Hyphomicrobiales</taxon>
        <taxon>Brucellaceae</taxon>
        <taxon>Brucella/Ochrobactrum group</taxon>
        <taxon>Brucella</taxon>
    </lineage>
</organism>
<reference key="1">
    <citation type="journal article" date="2005" name="Infect. Immun.">
        <title>Whole-genome analyses of speciation events in pathogenic Brucellae.</title>
        <authorList>
            <person name="Chain P.S."/>
            <person name="Comerci D.J."/>
            <person name="Tolmasky M.E."/>
            <person name="Larimer F.W."/>
            <person name="Malfatti S.A."/>
            <person name="Vergez L.M."/>
            <person name="Aguero F."/>
            <person name="Land M.L."/>
            <person name="Ugalde R.A."/>
            <person name="Garcia E."/>
        </authorList>
    </citation>
    <scope>NUCLEOTIDE SEQUENCE [LARGE SCALE GENOMIC DNA]</scope>
    <source>
        <strain>2308</strain>
    </source>
</reference>
<reference key="2">
    <citation type="submission" date="1995-09" db="EMBL/GenBank/DDBJ databases">
        <title>Cloning and sequencing the Brucella abortus purA gene.</title>
        <authorList>
            <person name="Tatum F.M."/>
            <person name="Steckelberg M.A."/>
        </authorList>
    </citation>
    <scope>NUCLEOTIDE SEQUENCE [GENOMIC DNA] OF 1-403</scope>
</reference>
<evidence type="ECO:0000255" key="1">
    <source>
        <dbReference type="HAMAP-Rule" id="MF_00011"/>
    </source>
</evidence>
<evidence type="ECO:0000305" key="2"/>
<keyword id="KW-0963">Cytoplasm</keyword>
<keyword id="KW-0342">GTP-binding</keyword>
<keyword id="KW-0436">Ligase</keyword>
<keyword id="KW-0460">Magnesium</keyword>
<keyword id="KW-0479">Metal-binding</keyword>
<keyword id="KW-0547">Nucleotide-binding</keyword>
<keyword id="KW-0658">Purine biosynthesis</keyword>
<keyword id="KW-1185">Reference proteome</keyword>
<feature type="chain" id="PRO_0000095154" description="Adenylosuccinate synthetase">
    <location>
        <begin position="1"/>
        <end position="429"/>
    </location>
</feature>
<feature type="active site" description="Proton acceptor" evidence="1">
    <location>
        <position position="13"/>
    </location>
</feature>
<feature type="active site" description="Proton donor" evidence="1">
    <location>
        <position position="41"/>
    </location>
</feature>
<feature type="binding site" evidence="1">
    <location>
        <begin position="12"/>
        <end position="18"/>
    </location>
    <ligand>
        <name>GTP</name>
        <dbReference type="ChEBI" id="CHEBI:37565"/>
    </ligand>
</feature>
<feature type="binding site" description="in other chain" evidence="1">
    <location>
        <begin position="13"/>
        <end position="16"/>
    </location>
    <ligand>
        <name>IMP</name>
        <dbReference type="ChEBI" id="CHEBI:58053"/>
        <note>ligand shared between dimeric partners</note>
    </ligand>
</feature>
<feature type="binding site" evidence="1">
    <location>
        <position position="13"/>
    </location>
    <ligand>
        <name>Mg(2+)</name>
        <dbReference type="ChEBI" id="CHEBI:18420"/>
    </ligand>
</feature>
<feature type="binding site" description="in other chain" evidence="1">
    <location>
        <begin position="38"/>
        <end position="41"/>
    </location>
    <ligand>
        <name>IMP</name>
        <dbReference type="ChEBI" id="CHEBI:58053"/>
        <note>ligand shared between dimeric partners</note>
    </ligand>
</feature>
<feature type="binding site" evidence="1">
    <location>
        <begin position="40"/>
        <end position="42"/>
    </location>
    <ligand>
        <name>GTP</name>
        <dbReference type="ChEBI" id="CHEBI:37565"/>
    </ligand>
</feature>
<feature type="binding site" evidence="1">
    <location>
        <position position="40"/>
    </location>
    <ligand>
        <name>Mg(2+)</name>
        <dbReference type="ChEBI" id="CHEBI:18420"/>
    </ligand>
</feature>
<feature type="binding site" description="in other chain" evidence="1">
    <location>
        <position position="129"/>
    </location>
    <ligand>
        <name>IMP</name>
        <dbReference type="ChEBI" id="CHEBI:58053"/>
        <note>ligand shared between dimeric partners</note>
    </ligand>
</feature>
<feature type="binding site" evidence="1">
    <location>
        <position position="143"/>
    </location>
    <ligand>
        <name>IMP</name>
        <dbReference type="ChEBI" id="CHEBI:58053"/>
        <note>ligand shared between dimeric partners</note>
    </ligand>
</feature>
<feature type="binding site" description="in other chain" evidence="1">
    <location>
        <position position="223"/>
    </location>
    <ligand>
        <name>IMP</name>
        <dbReference type="ChEBI" id="CHEBI:58053"/>
        <note>ligand shared between dimeric partners</note>
    </ligand>
</feature>
<feature type="binding site" description="in other chain" evidence="1">
    <location>
        <position position="238"/>
    </location>
    <ligand>
        <name>IMP</name>
        <dbReference type="ChEBI" id="CHEBI:58053"/>
        <note>ligand shared between dimeric partners</note>
    </ligand>
</feature>
<feature type="binding site" evidence="1">
    <location>
        <begin position="298"/>
        <end position="304"/>
    </location>
    <ligand>
        <name>substrate</name>
    </ligand>
</feature>
<feature type="binding site" description="in other chain" evidence="1">
    <location>
        <position position="302"/>
    </location>
    <ligand>
        <name>IMP</name>
        <dbReference type="ChEBI" id="CHEBI:58053"/>
        <note>ligand shared between dimeric partners</note>
    </ligand>
</feature>
<feature type="binding site" evidence="1">
    <location>
        <position position="304"/>
    </location>
    <ligand>
        <name>GTP</name>
        <dbReference type="ChEBI" id="CHEBI:37565"/>
    </ligand>
</feature>
<feature type="binding site" evidence="1">
    <location>
        <begin position="330"/>
        <end position="332"/>
    </location>
    <ligand>
        <name>GTP</name>
        <dbReference type="ChEBI" id="CHEBI:37565"/>
    </ligand>
</feature>
<feature type="binding site" evidence="1">
    <location>
        <begin position="412"/>
        <end position="414"/>
    </location>
    <ligand>
        <name>GTP</name>
        <dbReference type="ChEBI" id="CHEBI:37565"/>
    </ligand>
</feature>
<feature type="sequence conflict" description="In Ref. 2; AAA75455." evidence="2" ref="2">
    <original>A</original>
    <variation>R</variation>
    <location>
        <position position="213"/>
    </location>
</feature>
<feature type="sequence conflict" description="In Ref. 2; AAA75455." evidence="2" ref="2">
    <original>AQG</original>
    <variation>RR</variation>
    <location>
        <begin position="222"/>
        <end position="224"/>
    </location>
</feature>
<dbReference type="EC" id="6.3.4.4" evidence="1"/>
<dbReference type="EMBL" id="AM040264">
    <property type="protein sequence ID" value="CAJ11651.1"/>
    <property type="molecule type" value="Genomic_DNA"/>
</dbReference>
<dbReference type="EMBL" id="L43054">
    <property type="protein sequence ID" value="AAA75455.1"/>
    <property type="status" value="ALT_FRAME"/>
    <property type="molecule type" value="Genomic_DNA"/>
</dbReference>
<dbReference type="RefSeq" id="WP_002964773.1">
    <property type="nucleotide sequence ID" value="NZ_KN046823.1"/>
</dbReference>
<dbReference type="SMR" id="Q2YQI5"/>
<dbReference type="STRING" id="359391.BAB1_1695"/>
<dbReference type="KEGG" id="bmf:BAB1_1695"/>
<dbReference type="PATRIC" id="fig|359391.11.peg.210"/>
<dbReference type="HOGENOM" id="CLU_029848_0_0_5"/>
<dbReference type="PhylomeDB" id="Q2YQI5"/>
<dbReference type="UniPathway" id="UPA00075">
    <property type="reaction ID" value="UER00335"/>
</dbReference>
<dbReference type="Proteomes" id="UP000002719">
    <property type="component" value="Chromosome I"/>
</dbReference>
<dbReference type="GO" id="GO:0005737">
    <property type="term" value="C:cytoplasm"/>
    <property type="evidence" value="ECO:0007669"/>
    <property type="project" value="UniProtKB-SubCell"/>
</dbReference>
<dbReference type="GO" id="GO:0004019">
    <property type="term" value="F:adenylosuccinate synthase activity"/>
    <property type="evidence" value="ECO:0007669"/>
    <property type="project" value="UniProtKB-UniRule"/>
</dbReference>
<dbReference type="GO" id="GO:0005525">
    <property type="term" value="F:GTP binding"/>
    <property type="evidence" value="ECO:0007669"/>
    <property type="project" value="UniProtKB-UniRule"/>
</dbReference>
<dbReference type="GO" id="GO:0000287">
    <property type="term" value="F:magnesium ion binding"/>
    <property type="evidence" value="ECO:0007669"/>
    <property type="project" value="UniProtKB-UniRule"/>
</dbReference>
<dbReference type="GO" id="GO:0044208">
    <property type="term" value="P:'de novo' AMP biosynthetic process"/>
    <property type="evidence" value="ECO:0007669"/>
    <property type="project" value="UniProtKB-UniRule"/>
</dbReference>
<dbReference type="GO" id="GO:0046040">
    <property type="term" value="P:IMP metabolic process"/>
    <property type="evidence" value="ECO:0007669"/>
    <property type="project" value="TreeGrafter"/>
</dbReference>
<dbReference type="CDD" id="cd03108">
    <property type="entry name" value="AdSS"/>
    <property type="match status" value="1"/>
</dbReference>
<dbReference type="FunFam" id="1.10.300.10:FF:000001">
    <property type="entry name" value="Adenylosuccinate synthetase"/>
    <property type="match status" value="1"/>
</dbReference>
<dbReference type="FunFam" id="3.90.170.10:FF:000001">
    <property type="entry name" value="Adenylosuccinate synthetase"/>
    <property type="match status" value="1"/>
</dbReference>
<dbReference type="Gene3D" id="3.40.440.10">
    <property type="entry name" value="Adenylosuccinate Synthetase, subunit A, domain 1"/>
    <property type="match status" value="1"/>
</dbReference>
<dbReference type="Gene3D" id="1.10.300.10">
    <property type="entry name" value="Adenylosuccinate Synthetase, subunit A, domain 2"/>
    <property type="match status" value="1"/>
</dbReference>
<dbReference type="Gene3D" id="3.90.170.10">
    <property type="entry name" value="Adenylosuccinate Synthetase, subunit A, domain 3"/>
    <property type="match status" value="1"/>
</dbReference>
<dbReference type="HAMAP" id="MF_00011">
    <property type="entry name" value="Adenylosucc_synth"/>
    <property type="match status" value="1"/>
</dbReference>
<dbReference type="InterPro" id="IPR018220">
    <property type="entry name" value="Adenylosuccin_syn_GTP-bd"/>
</dbReference>
<dbReference type="InterPro" id="IPR033128">
    <property type="entry name" value="Adenylosuccin_syn_Lys_AS"/>
</dbReference>
<dbReference type="InterPro" id="IPR042109">
    <property type="entry name" value="Adenylosuccinate_synth_dom1"/>
</dbReference>
<dbReference type="InterPro" id="IPR042110">
    <property type="entry name" value="Adenylosuccinate_synth_dom2"/>
</dbReference>
<dbReference type="InterPro" id="IPR042111">
    <property type="entry name" value="Adenylosuccinate_synth_dom3"/>
</dbReference>
<dbReference type="InterPro" id="IPR001114">
    <property type="entry name" value="Adenylosuccinate_synthetase"/>
</dbReference>
<dbReference type="InterPro" id="IPR027417">
    <property type="entry name" value="P-loop_NTPase"/>
</dbReference>
<dbReference type="NCBIfam" id="NF002223">
    <property type="entry name" value="PRK01117.1"/>
    <property type="match status" value="1"/>
</dbReference>
<dbReference type="NCBIfam" id="TIGR00184">
    <property type="entry name" value="purA"/>
    <property type="match status" value="1"/>
</dbReference>
<dbReference type="PANTHER" id="PTHR11846">
    <property type="entry name" value="ADENYLOSUCCINATE SYNTHETASE"/>
    <property type="match status" value="1"/>
</dbReference>
<dbReference type="PANTHER" id="PTHR11846:SF0">
    <property type="entry name" value="ADENYLOSUCCINATE SYNTHETASE"/>
    <property type="match status" value="1"/>
</dbReference>
<dbReference type="Pfam" id="PF00709">
    <property type="entry name" value="Adenylsucc_synt"/>
    <property type="match status" value="1"/>
</dbReference>
<dbReference type="SMART" id="SM00788">
    <property type="entry name" value="Adenylsucc_synt"/>
    <property type="match status" value="1"/>
</dbReference>
<dbReference type="SUPFAM" id="SSF52540">
    <property type="entry name" value="P-loop containing nucleoside triphosphate hydrolases"/>
    <property type="match status" value="1"/>
</dbReference>
<dbReference type="PROSITE" id="PS01266">
    <property type="entry name" value="ADENYLOSUCCIN_SYN_1"/>
    <property type="match status" value="1"/>
</dbReference>
<dbReference type="PROSITE" id="PS00513">
    <property type="entry name" value="ADENYLOSUCCIN_SYN_2"/>
    <property type="match status" value="1"/>
</dbReference>
<comment type="function">
    <text evidence="1">Plays an important role in the de novo pathway of purine nucleotide biosynthesis. Catalyzes the first committed step in the biosynthesis of AMP from IMP.</text>
</comment>
<comment type="catalytic activity">
    <reaction evidence="1">
        <text>IMP + L-aspartate + GTP = N(6)-(1,2-dicarboxyethyl)-AMP + GDP + phosphate + 2 H(+)</text>
        <dbReference type="Rhea" id="RHEA:15753"/>
        <dbReference type="ChEBI" id="CHEBI:15378"/>
        <dbReference type="ChEBI" id="CHEBI:29991"/>
        <dbReference type="ChEBI" id="CHEBI:37565"/>
        <dbReference type="ChEBI" id="CHEBI:43474"/>
        <dbReference type="ChEBI" id="CHEBI:57567"/>
        <dbReference type="ChEBI" id="CHEBI:58053"/>
        <dbReference type="ChEBI" id="CHEBI:58189"/>
        <dbReference type="EC" id="6.3.4.4"/>
    </reaction>
</comment>
<comment type="cofactor">
    <cofactor evidence="1">
        <name>Mg(2+)</name>
        <dbReference type="ChEBI" id="CHEBI:18420"/>
    </cofactor>
    <text evidence="1">Binds 1 Mg(2+) ion per subunit.</text>
</comment>
<comment type="pathway">
    <text evidence="1">Purine metabolism; AMP biosynthesis via de novo pathway; AMP from IMP: step 1/2.</text>
</comment>
<comment type="subunit">
    <text evidence="1">Homodimer.</text>
</comment>
<comment type="subcellular location">
    <subcellularLocation>
        <location evidence="1">Cytoplasm</location>
    </subcellularLocation>
</comment>
<comment type="similarity">
    <text evidence="1">Belongs to the adenylosuccinate synthetase family.</text>
</comment>
<comment type="sequence caution" evidence="2">
    <conflict type="frameshift">
        <sequence resource="EMBL-CDS" id="AAA75455"/>
    </conflict>
</comment>
<proteinExistence type="inferred from homology"/>
<accession>Q2YQI5</accession>
<accession>P52004</accession>
<accession>Q57BJ7</accession>
<protein>
    <recommendedName>
        <fullName evidence="1">Adenylosuccinate synthetase</fullName>
        <shortName evidence="1">AMPSase</shortName>
        <shortName evidence="1">AdSS</shortName>
        <ecNumber evidence="1">6.3.4.4</ecNumber>
    </recommendedName>
    <alternativeName>
        <fullName evidence="1">IMP--aspartate ligase</fullName>
    </alternativeName>
</protein>